<reference key="1">
    <citation type="journal article" date="2002" name="Gene">
        <title>A survey of gene expression and diversity in the venom glands of the pitviper snake Bothrops insularis through the generation of expressed sequence tags (ESTs).</title>
        <authorList>
            <person name="Junqueira-de-Azevedo I.L.M."/>
            <person name="Ho P.L."/>
        </authorList>
    </citation>
    <scope>NUCLEOTIDE SEQUENCE [MRNA]</scope>
    <source>
        <tissue>Venom gland</tissue>
    </source>
</reference>
<reference key="2">
    <citation type="journal article" date="2006" name="Biochimie">
        <title>Purification, sequencing and structural analysis of two acidic phospholipases A2 from the venom of Bothrops insularis (jararaca ilhoa).</title>
        <authorList>
            <person name="Cogo J.C."/>
            <person name="Lilla S."/>
            <person name="Souza G.H.M.F."/>
            <person name="Hyslop S."/>
            <person name="de Nucci G."/>
        </authorList>
    </citation>
    <scope>PROTEIN SEQUENCE OF 17-138</scope>
    <scope>FUNCTION</scope>
    <scope>SUBCELLULAR LOCATION</scope>
    <scope>MASS SPECTROMETRY</scope>
    <source>
        <tissue>Venom</tissue>
    </source>
</reference>
<name>PA2A_BOTIN</name>
<feature type="signal peptide" evidence="5">
    <location>
        <begin position="1"/>
        <end position="16"/>
    </location>
</feature>
<feature type="chain" id="PRO_0000022820" description="Acidic phospholipase A2 BITP01A">
    <location>
        <begin position="17"/>
        <end position="138"/>
    </location>
</feature>
<feature type="active site" evidence="1">
    <location>
        <position position="63"/>
    </location>
</feature>
<feature type="active site" evidence="1">
    <location>
        <position position="105"/>
    </location>
</feature>
<feature type="binding site" evidence="2">
    <location>
        <position position="43"/>
    </location>
    <ligand>
        <name>Ca(2+)</name>
        <dbReference type="ChEBI" id="CHEBI:29108"/>
    </ligand>
</feature>
<feature type="binding site" evidence="2">
    <location>
        <position position="45"/>
    </location>
    <ligand>
        <name>Ca(2+)</name>
        <dbReference type="ChEBI" id="CHEBI:29108"/>
    </ligand>
</feature>
<feature type="binding site" evidence="2">
    <location>
        <position position="47"/>
    </location>
    <ligand>
        <name>Ca(2+)</name>
        <dbReference type="ChEBI" id="CHEBI:29108"/>
    </ligand>
</feature>
<feature type="binding site" evidence="2">
    <location>
        <position position="64"/>
    </location>
    <ligand>
        <name>Ca(2+)</name>
        <dbReference type="ChEBI" id="CHEBI:29108"/>
    </ligand>
</feature>
<feature type="disulfide bond" evidence="2">
    <location>
        <begin position="42"/>
        <end position="131"/>
    </location>
</feature>
<feature type="disulfide bond" evidence="2">
    <location>
        <begin position="44"/>
        <end position="60"/>
    </location>
</feature>
<feature type="disulfide bond" evidence="2">
    <location>
        <begin position="59"/>
        <end position="111"/>
    </location>
</feature>
<feature type="disulfide bond" evidence="2">
    <location>
        <begin position="65"/>
        <end position="138"/>
    </location>
</feature>
<feature type="disulfide bond" evidence="2">
    <location>
        <begin position="66"/>
        <end position="104"/>
    </location>
</feature>
<feature type="disulfide bond" evidence="2">
    <location>
        <begin position="73"/>
        <end position="97"/>
    </location>
</feature>
<feature type="disulfide bond" evidence="2">
    <location>
        <begin position="91"/>
        <end position="102"/>
    </location>
</feature>
<protein>
    <recommendedName>
        <fullName>Acidic phospholipase A2 BITP01A</fullName>
        <shortName>svPLA2</shortName>
        <ecNumber>3.1.1.4</ecNumber>
    </recommendedName>
    <alternativeName>
        <fullName>BinTX-I</fullName>
    </alternativeName>
    <alternativeName>
        <fullName>Phosphatidylcholine 2-acylhydrolase</fullName>
    </alternativeName>
</protein>
<organism>
    <name type="scientific">Bothrops insularis</name>
    <name type="common">Golden lancehead</name>
    <name type="synonym">Lachesis insularis</name>
    <dbReference type="NCBI Taxonomy" id="8723"/>
    <lineage>
        <taxon>Eukaryota</taxon>
        <taxon>Metazoa</taxon>
        <taxon>Chordata</taxon>
        <taxon>Craniata</taxon>
        <taxon>Vertebrata</taxon>
        <taxon>Euteleostomi</taxon>
        <taxon>Lepidosauria</taxon>
        <taxon>Squamata</taxon>
        <taxon>Bifurcata</taxon>
        <taxon>Unidentata</taxon>
        <taxon>Episquamata</taxon>
        <taxon>Toxicofera</taxon>
        <taxon>Serpentes</taxon>
        <taxon>Colubroidea</taxon>
        <taxon>Viperidae</taxon>
        <taxon>Crotalinae</taxon>
        <taxon>Bothrops</taxon>
    </lineage>
</organism>
<proteinExistence type="evidence at protein level"/>
<dbReference type="EC" id="3.1.1.4"/>
<dbReference type="EMBL" id="AF490535">
    <property type="protein sequence ID" value="AAM09694.1"/>
    <property type="molecule type" value="mRNA"/>
</dbReference>
<dbReference type="SMR" id="Q8QG87"/>
<dbReference type="BRENDA" id="3.1.1.4">
    <property type="organism ID" value="9397"/>
</dbReference>
<dbReference type="GO" id="GO:0005576">
    <property type="term" value="C:extracellular region"/>
    <property type="evidence" value="ECO:0007669"/>
    <property type="project" value="UniProtKB-SubCell"/>
</dbReference>
<dbReference type="GO" id="GO:0005509">
    <property type="term" value="F:calcium ion binding"/>
    <property type="evidence" value="ECO:0007669"/>
    <property type="project" value="InterPro"/>
</dbReference>
<dbReference type="GO" id="GO:0047498">
    <property type="term" value="F:calcium-dependent phospholipase A2 activity"/>
    <property type="evidence" value="ECO:0007669"/>
    <property type="project" value="TreeGrafter"/>
</dbReference>
<dbReference type="GO" id="GO:0005543">
    <property type="term" value="F:phospholipid binding"/>
    <property type="evidence" value="ECO:0007669"/>
    <property type="project" value="TreeGrafter"/>
</dbReference>
<dbReference type="GO" id="GO:0090729">
    <property type="term" value="F:toxin activity"/>
    <property type="evidence" value="ECO:0007669"/>
    <property type="project" value="UniProtKB-KW"/>
</dbReference>
<dbReference type="GO" id="GO:0050482">
    <property type="term" value="P:arachidonate secretion"/>
    <property type="evidence" value="ECO:0007669"/>
    <property type="project" value="InterPro"/>
</dbReference>
<dbReference type="GO" id="GO:0016042">
    <property type="term" value="P:lipid catabolic process"/>
    <property type="evidence" value="ECO:0007669"/>
    <property type="project" value="UniProtKB-KW"/>
</dbReference>
<dbReference type="GO" id="GO:0042130">
    <property type="term" value="P:negative regulation of T cell proliferation"/>
    <property type="evidence" value="ECO:0007669"/>
    <property type="project" value="TreeGrafter"/>
</dbReference>
<dbReference type="GO" id="GO:0006644">
    <property type="term" value="P:phospholipid metabolic process"/>
    <property type="evidence" value="ECO:0007669"/>
    <property type="project" value="InterPro"/>
</dbReference>
<dbReference type="CDD" id="cd00125">
    <property type="entry name" value="PLA2c"/>
    <property type="match status" value="1"/>
</dbReference>
<dbReference type="FunFam" id="1.20.90.10:FF:000001">
    <property type="entry name" value="Basic phospholipase A2 homolog"/>
    <property type="match status" value="1"/>
</dbReference>
<dbReference type="Gene3D" id="1.20.90.10">
    <property type="entry name" value="Phospholipase A2 domain"/>
    <property type="match status" value="1"/>
</dbReference>
<dbReference type="InterPro" id="IPR001211">
    <property type="entry name" value="PLipase_A2"/>
</dbReference>
<dbReference type="InterPro" id="IPR033112">
    <property type="entry name" value="PLipase_A2_Asp_AS"/>
</dbReference>
<dbReference type="InterPro" id="IPR016090">
    <property type="entry name" value="PLipase_A2_dom"/>
</dbReference>
<dbReference type="InterPro" id="IPR036444">
    <property type="entry name" value="PLipase_A2_dom_sf"/>
</dbReference>
<dbReference type="InterPro" id="IPR033113">
    <property type="entry name" value="PLipase_A2_His_AS"/>
</dbReference>
<dbReference type="PANTHER" id="PTHR11716">
    <property type="entry name" value="PHOSPHOLIPASE A2 FAMILY MEMBER"/>
    <property type="match status" value="1"/>
</dbReference>
<dbReference type="PANTHER" id="PTHR11716:SF9">
    <property type="entry name" value="PHOSPHOLIPASE A2, MEMBRANE ASSOCIATED"/>
    <property type="match status" value="1"/>
</dbReference>
<dbReference type="Pfam" id="PF00068">
    <property type="entry name" value="Phospholip_A2_1"/>
    <property type="match status" value="1"/>
</dbReference>
<dbReference type="PRINTS" id="PR00389">
    <property type="entry name" value="PHPHLIPASEA2"/>
</dbReference>
<dbReference type="SMART" id="SM00085">
    <property type="entry name" value="PA2c"/>
    <property type="match status" value="1"/>
</dbReference>
<dbReference type="SUPFAM" id="SSF48619">
    <property type="entry name" value="Phospholipase A2, PLA2"/>
    <property type="match status" value="1"/>
</dbReference>
<dbReference type="PROSITE" id="PS00119">
    <property type="entry name" value="PA2_ASP"/>
    <property type="match status" value="1"/>
</dbReference>
<dbReference type="PROSITE" id="PS00118">
    <property type="entry name" value="PA2_HIS"/>
    <property type="match status" value="1"/>
</dbReference>
<accession>Q8QG87</accession>
<sequence length="138" mass="15759">MRTLWIMAVLLVGVEGNLWQFGKMMNYVMGQSVVYKYFYYGCYCGWGGIGQPRDATDRCCFVHDCCYGKVTGCDPKTDSYTYSKENGDVVCGGDDPCKKQICECDRVAATCFRDNKDTYDMKYWLYGAKNCQEESEPC</sequence>
<evidence type="ECO:0000250" key="1">
    <source>
        <dbReference type="UniProtKB" id="P14418"/>
    </source>
</evidence>
<evidence type="ECO:0000250" key="2">
    <source>
        <dbReference type="UniProtKB" id="P59071"/>
    </source>
</evidence>
<evidence type="ECO:0000255" key="3">
    <source>
        <dbReference type="PROSITE-ProRule" id="PRU10035"/>
    </source>
</evidence>
<evidence type="ECO:0000255" key="4">
    <source>
        <dbReference type="PROSITE-ProRule" id="PRU10036"/>
    </source>
</evidence>
<evidence type="ECO:0000269" key="5">
    <source>
    </source>
</evidence>
<evidence type="ECO:0000305" key="6"/>
<evidence type="ECO:0000305" key="7">
    <source>
    </source>
</evidence>
<keyword id="KW-0106">Calcium</keyword>
<keyword id="KW-0903">Direct protein sequencing</keyword>
<keyword id="KW-1015">Disulfide bond</keyword>
<keyword id="KW-0378">Hydrolase</keyword>
<keyword id="KW-0442">Lipid degradation</keyword>
<keyword id="KW-0443">Lipid metabolism</keyword>
<keyword id="KW-0479">Metal-binding</keyword>
<keyword id="KW-0959">Myotoxin</keyword>
<keyword id="KW-0964">Secreted</keyword>
<keyword id="KW-0732">Signal</keyword>
<keyword id="KW-0800">Toxin</keyword>
<comment type="function">
    <text evidence="5">Snake venom phospholipase A2 (PLA2) that induces edema in mice, produces neuromuscular blockade in chick biventer cervicis, increases CK release and produces myonecrosis. PLA2 catalyzes the calcium-dependent hydrolysis of the 2-acyl groups in 3-sn-phosphoglycerides.</text>
</comment>
<comment type="catalytic activity">
    <reaction evidence="3 4">
        <text>a 1,2-diacyl-sn-glycero-3-phosphocholine + H2O = a 1-acyl-sn-glycero-3-phosphocholine + a fatty acid + H(+)</text>
        <dbReference type="Rhea" id="RHEA:15801"/>
        <dbReference type="ChEBI" id="CHEBI:15377"/>
        <dbReference type="ChEBI" id="CHEBI:15378"/>
        <dbReference type="ChEBI" id="CHEBI:28868"/>
        <dbReference type="ChEBI" id="CHEBI:57643"/>
        <dbReference type="ChEBI" id="CHEBI:58168"/>
        <dbReference type="EC" id="3.1.1.4"/>
    </reaction>
</comment>
<comment type="cofactor">
    <cofactor evidence="2">
        <name>Ca(2+)</name>
        <dbReference type="ChEBI" id="CHEBI:29108"/>
    </cofactor>
    <text evidence="2">Binds 1 Ca(2+) ion.</text>
</comment>
<comment type="subcellular location">
    <subcellularLocation>
        <location evidence="5">Secreted</location>
    </subcellularLocation>
</comment>
<comment type="tissue specificity">
    <text evidence="7">Expressed by the venom gland.</text>
</comment>
<comment type="mass spectrometry" mass="13975.0" method="Electrospray" evidence="5"/>
<comment type="similarity">
    <text evidence="6">Belongs to the phospholipase A2 family. Group II subfamily. D49 sub-subfamily.</text>
</comment>